<comment type="subunit">
    <text evidence="2">Component of the mitochondrial ribosome large subunit (39S) which comprises a 16S rRNA and about 50 distinct proteins.</text>
</comment>
<comment type="subcellular location">
    <subcellularLocation>
        <location evidence="2">Mitochondrion</location>
    </subcellularLocation>
</comment>
<comment type="similarity">
    <text evidence="3">Belongs to the universal ribosomal protein uL30 family.</text>
</comment>
<feature type="transit peptide" description="Mitochondrion" evidence="1">
    <location>
        <begin position="1"/>
        <end position="34"/>
    </location>
</feature>
<feature type="chain" id="PRO_0000261650" description="Large ribosomal subunit protein uL30m">
    <location>
        <begin position="35"/>
        <end position="161"/>
    </location>
</feature>
<reference key="1">
    <citation type="submission" date="2005-06" db="EMBL/GenBank/DDBJ databases">
        <title>DNA sequences of macaque genes expressed in brain or testis and its evolutionary implications.</title>
        <authorList>
            <consortium name="International consortium for macaque cDNA sequencing and analysis"/>
        </authorList>
    </citation>
    <scope>NUCLEOTIDE SEQUENCE [LARGE SCALE MRNA]</scope>
    <source>
        <tissue>Testis</tissue>
    </source>
</reference>
<dbReference type="EMBL" id="AB169083">
    <property type="protein sequence ID" value="BAE01177.1"/>
    <property type="molecule type" value="mRNA"/>
</dbReference>
<dbReference type="RefSeq" id="NP_001271011.1">
    <property type="nucleotide sequence ID" value="NM_001284082.1"/>
</dbReference>
<dbReference type="SMR" id="Q4R6U7"/>
<dbReference type="STRING" id="9541.ENSMFAP00000004020"/>
<dbReference type="eggNOG" id="KOG4799">
    <property type="taxonomic scope" value="Eukaryota"/>
</dbReference>
<dbReference type="Proteomes" id="UP000233100">
    <property type="component" value="Unplaced"/>
</dbReference>
<dbReference type="GO" id="GO:0005762">
    <property type="term" value="C:mitochondrial large ribosomal subunit"/>
    <property type="evidence" value="ECO:0000250"/>
    <property type="project" value="UniProtKB"/>
</dbReference>
<dbReference type="GO" id="GO:0003735">
    <property type="term" value="F:structural constituent of ribosome"/>
    <property type="evidence" value="ECO:0007669"/>
    <property type="project" value="InterPro"/>
</dbReference>
<dbReference type="GO" id="GO:0006412">
    <property type="term" value="P:translation"/>
    <property type="evidence" value="ECO:0007669"/>
    <property type="project" value="InterPro"/>
</dbReference>
<dbReference type="CDD" id="cd01658">
    <property type="entry name" value="Ribosomal_L30"/>
    <property type="match status" value="1"/>
</dbReference>
<dbReference type="FunFam" id="3.30.1390.20:FF:000005">
    <property type="entry name" value="39S ribosomal protein L30, mitochondrial"/>
    <property type="match status" value="1"/>
</dbReference>
<dbReference type="Gene3D" id="3.30.1390.20">
    <property type="entry name" value="Ribosomal protein L30, ferredoxin-like fold domain"/>
    <property type="match status" value="1"/>
</dbReference>
<dbReference type="InterPro" id="IPR036919">
    <property type="entry name" value="Ribo_uL30_ferredoxin-like_sf"/>
</dbReference>
<dbReference type="InterPro" id="IPR005996">
    <property type="entry name" value="Ribosomal_uL30_bac-type"/>
</dbReference>
<dbReference type="InterPro" id="IPR016082">
    <property type="entry name" value="Ribosomal_uL30_ferredoxin-like"/>
</dbReference>
<dbReference type="PANTHER" id="PTHR15892:SF2">
    <property type="entry name" value="LARGE RIBOSOMAL SUBUNIT PROTEIN UL30M"/>
    <property type="match status" value="1"/>
</dbReference>
<dbReference type="PANTHER" id="PTHR15892">
    <property type="entry name" value="MITOCHONDRIAL RIBOSOMAL PROTEIN L30"/>
    <property type="match status" value="1"/>
</dbReference>
<dbReference type="Pfam" id="PF00327">
    <property type="entry name" value="Ribosomal_L30"/>
    <property type="match status" value="1"/>
</dbReference>
<dbReference type="SUPFAM" id="SSF55129">
    <property type="entry name" value="Ribosomal protein L30p/L7e"/>
    <property type="match status" value="1"/>
</dbReference>
<protein>
    <recommendedName>
        <fullName evidence="3">Large ribosomal subunit protein uL30m</fullName>
    </recommendedName>
    <alternativeName>
        <fullName>39S ribosomal protein L30, mitochondrial</fullName>
        <shortName>L30mt</shortName>
        <shortName>MRP-L30</shortName>
    </alternativeName>
</protein>
<name>RM30_MACFA</name>
<evidence type="ECO:0000250" key="1"/>
<evidence type="ECO:0000250" key="2">
    <source>
        <dbReference type="UniProtKB" id="Q8TCC3"/>
    </source>
</evidence>
<evidence type="ECO:0000305" key="3"/>
<proteinExistence type="evidence at transcript level"/>
<sequence length="161" mass="18511">MAGILRLVVQRPPGGLQTVTKGVESLIGTDWIRHKFTKSRIPDKVFQASPEDHEKYGGDPQNPHKLHIVTRIKSTRRRPYWEKDIIKMLGLEKSHTPQVHKNIPSVNSKLKVVKHLIRIQPLKLPQGLPTEENMSNMYLKSTGELVVQWHLKPVEQKTHES</sequence>
<keyword id="KW-0496">Mitochondrion</keyword>
<keyword id="KW-1185">Reference proteome</keyword>
<keyword id="KW-0687">Ribonucleoprotein</keyword>
<keyword id="KW-0689">Ribosomal protein</keyword>
<keyword id="KW-0809">Transit peptide</keyword>
<gene>
    <name type="primary">MRPL30</name>
    <name type="ORF">QtsA-17076</name>
</gene>
<organism>
    <name type="scientific">Macaca fascicularis</name>
    <name type="common">Crab-eating macaque</name>
    <name type="synonym">Cynomolgus monkey</name>
    <dbReference type="NCBI Taxonomy" id="9541"/>
    <lineage>
        <taxon>Eukaryota</taxon>
        <taxon>Metazoa</taxon>
        <taxon>Chordata</taxon>
        <taxon>Craniata</taxon>
        <taxon>Vertebrata</taxon>
        <taxon>Euteleostomi</taxon>
        <taxon>Mammalia</taxon>
        <taxon>Eutheria</taxon>
        <taxon>Euarchontoglires</taxon>
        <taxon>Primates</taxon>
        <taxon>Haplorrhini</taxon>
        <taxon>Catarrhini</taxon>
        <taxon>Cercopithecidae</taxon>
        <taxon>Cercopithecinae</taxon>
        <taxon>Macaca</taxon>
    </lineage>
</organism>
<accession>Q4R6U7</accession>